<feature type="chain" id="PRO_0000144335" description="ATP synthase subunit alpha">
    <location>
        <begin position="1"/>
        <end position="518"/>
    </location>
</feature>
<feature type="binding site" evidence="1">
    <location>
        <begin position="169"/>
        <end position="176"/>
    </location>
    <ligand>
        <name>ATP</name>
        <dbReference type="ChEBI" id="CHEBI:30616"/>
    </ligand>
</feature>
<feature type="site" description="Required for activity" evidence="1">
    <location>
        <position position="362"/>
    </location>
</feature>
<feature type="sequence conflict" description="In Ref. 2; AAC43205." evidence="2" ref="2">
    <original>I</original>
    <variation>F</variation>
    <location>
        <position position="453"/>
    </location>
</feature>
<gene>
    <name evidence="1" type="primary">atpA</name>
    <name type="ordered locus">MG401</name>
</gene>
<name>ATPA_MYCGE</name>
<keyword id="KW-0066">ATP synthesis</keyword>
<keyword id="KW-0067">ATP-binding</keyword>
<keyword id="KW-1003">Cell membrane</keyword>
<keyword id="KW-0139">CF(1)</keyword>
<keyword id="KW-0375">Hydrogen ion transport</keyword>
<keyword id="KW-0406">Ion transport</keyword>
<keyword id="KW-0472">Membrane</keyword>
<keyword id="KW-0547">Nucleotide-binding</keyword>
<keyword id="KW-1185">Reference proteome</keyword>
<keyword id="KW-1278">Translocase</keyword>
<keyword id="KW-0813">Transport</keyword>
<proteinExistence type="inferred from homology"/>
<comment type="function">
    <text evidence="1">Produces ATP from ADP in the presence of a proton gradient across the membrane. The alpha chain is a regulatory subunit.</text>
</comment>
<comment type="catalytic activity">
    <reaction evidence="1">
        <text>ATP + H2O + 4 H(+)(in) = ADP + phosphate + 5 H(+)(out)</text>
        <dbReference type="Rhea" id="RHEA:57720"/>
        <dbReference type="ChEBI" id="CHEBI:15377"/>
        <dbReference type="ChEBI" id="CHEBI:15378"/>
        <dbReference type="ChEBI" id="CHEBI:30616"/>
        <dbReference type="ChEBI" id="CHEBI:43474"/>
        <dbReference type="ChEBI" id="CHEBI:456216"/>
        <dbReference type="EC" id="7.1.2.2"/>
    </reaction>
</comment>
<comment type="subunit">
    <text evidence="1">F-type ATPases have 2 components, CF(1) - the catalytic core - and CF(0) - the membrane proton channel. CF(1) has five subunits: alpha(3), beta(3), gamma(1), delta(1), epsilon(1). CF(0) has three main subunits: a(1), b(2) and c(9-12). The alpha and beta chains form an alternating ring which encloses part of the gamma chain. CF(1) is attached to CF(0) by a central stalk formed by the gamma and epsilon chains, while a peripheral stalk is formed by the delta and b chains.</text>
</comment>
<comment type="subcellular location">
    <subcellularLocation>
        <location evidence="1">Cell membrane</location>
        <topology evidence="1">Peripheral membrane protein</topology>
    </subcellularLocation>
</comment>
<comment type="similarity">
    <text evidence="1">Belongs to the ATPase alpha/beta chains family.</text>
</comment>
<comment type="sequence caution" evidence="2">
    <conflict type="frameshift">
        <sequence resource="EMBL-CDS" id="AAC43205"/>
    </conflict>
</comment>
<organism>
    <name type="scientific">Mycoplasma genitalium (strain ATCC 33530 / DSM 19775 / NCTC 10195 / G37)</name>
    <name type="common">Mycoplasmoides genitalium</name>
    <dbReference type="NCBI Taxonomy" id="243273"/>
    <lineage>
        <taxon>Bacteria</taxon>
        <taxon>Bacillati</taxon>
        <taxon>Mycoplasmatota</taxon>
        <taxon>Mycoplasmoidales</taxon>
        <taxon>Mycoplasmoidaceae</taxon>
        <taxon>Mycoplasmoides</taxon>
    </lineage>
</organism>
<accession>P47641</accession>
<dbReference type="EC" id="7.1.2.2" evidence="1"/>
<dbReference type="EMBL" id="L43967">
    <property type="protein sequence ID" value="AAC71629.1"/>
    <property type="molecule type" value="Genomic_DNA"/>
</dbReference>
<dbReference type="EMBL" id="U01727">
    <property type="protein sequence ID" value="AAC43205.2"/>
    <property type="status" value="ALT_FRAME"/>
    <property type="molecule type" value="Genomic_DNA"/>
</dbReference>
<dbReference type="PIR" id="D64244">
    <property type="entry name" value="D64244"/>
</dbReference>
<dbReference type="RefSeq" id="WP_009885622.1">
    <property type="nucleotide sequence ID" value="NC_000908.2"/>
</dbReference>
<dbReference type="SMR" id="P47641"/>
<dbReference type="FunCoup" id="P47641">
    <property type="interactions" value="190"/>
</dbReference>
<dbReference type="STRING" id="243273.MG_401"/>
<dbReference type="GeneID" id="88282587"/>
<dbReference type="KEGG" id="mge:MG_401"/>
<dbReference type="eggNOG" id="COG0056">
    <property type="taxonomic scope" value="Bacteria"/>
</dbReference>
<dbReference type="HOGENOM" id="CLU_010091_2_1_14"/>
<dbReference type="InParanoid" id="P47641"/>
<dbReference type="OrthoDB" id="9803053at2"/>
<dbReference type="BioCyc" id="MGEN243273:G1GJ2-498-MONOMER"/>
<dbReference type="Proteomes" id="UP000000807">
    <property type="component" value="Chromosome"/>
</dbReference>
<dbReference type="GO" id="GO:0005886">
    <property type="term" value="C:plasma membrane"/>
    <property type="evidence" value="ECO:0007669"/>
    <property type="project" value="UniProtKB-SubCell"/>
</dbReference>
<dbReference type="GO" id="GO:0045259">
    <property type="term" value="C:proton-transporting ATP synthase complex"/>
    <property type="evidence" value="ECO:0007669"/>
    <property type="project" value="UniProtKB-KW"/>
</dbReference>
<dbReference type="GO" id="GO:0043531">
    <property type="term" value="F:ADP binding"/>
    <property type="evidence" value="ECO:0000318"/>
    <property type="project" value="GO_Central"/>
</dbReference>
<dbReference type="GO" id="GO:0005524">
    <property type="term" value="F:ATP binding"/>
    <property type="evidence" value="ECO:0000318"/>
    <property type="project" value="GO_Central"/>
</dbReference>
<dbReference type="GO" id="GO:0046933">
    <property type="term" value="F:proton-transporting ATP synthase activity, rotational mechanism"/>
    <property type="evidence" value="ECO:0007669"/>
    <property type="project" value="UniProtKB-UniRule"/>
</dbReference>
<dbReference type="GO" id="GO:0015986">
    <property type="term" value="P:proton motive force-driven ATP synthesis"/>
    <property type="evidence" value="ECO:0000318"/>
    <property type="project" value="GO_Central"/>
</dbReference>
<dbReference type="CDD" id="cd18113">
    <property type="entry name" value="ATP-synt_F1_alpha_C"/>
    <property type="match status" value="1"/>
</dbReference>
<dbReference type="CDD" id="cd18116">
    <property type="entry name" value="ATP-synt_F1_alpha_N"/>
    <property type="match status" value="1"/>
</dbReference>
<dbReference type="CDD" id="cd01132">
    <property type="entry name" value="F1-ATPase_alpha_CD"/>
    <property type="match status" value="1"/>
</dbReference>
<dbReference type="FunFam" id="3.40.50.300:FF:000002">
    <property type="entry name" value="ATP synthase subunit alpha"/>
    <property type="match status" value="1"/>
</dbReference>
<dbReference type="Gene3D" id="2.40.30.20">
    <property type="match status" value="1"/>
</dbReference>
<dbReference type="Gene3D" id="1.20.150.20">
    <property type="entry name" value="ATP synthase alpha/beta chain, C-terminal domain"/>
    <property type="match status" value="1"/>
</dbReference>
<dbReference type="Gene3D" id="3.40.50.300">
    <property type="entry name" value="P-loop containing nucleotide triphosphate hydrolases"/>
    <property type="match status" value="1"/>
</dbReference>
<dbReference type="HAMAP" id="MF_01346">
    <property type="entry name" value="ATP_synth_alpha_bact"/>
    <property type="match status" value="1"/>
</dbReference>
<dbReference type="InterPro" id="IPR023366">
    <property type="entry name" value="ATP_synth_asu-like_sf"/>
</dbReference>
<dbReference type="InterPro" id="IPR000793">
    <property type="entry name" value="ATP_synth_asu_C"/>
</dbReference>
<dbReference type="InterPro" id="IPR038376">
    <property type="entry name" value="ATP_synth_asu_C_sf"/>
</dbReference>
<dbReference type="InterPro" id="IPR033732">
    <property type="entry name" value="ATP_synth_F1_a_nt-bd_dom"/>
</dbReference>
<dbReference type="InterPro" id="IPR005294">
    <property type="entry name" value="ATP_synth_F1_asu"/>
</dbReference>
<dbReference type="InterPro" id="IPR004100">
    <property type="entry name" value="ATPase_F1/V1/A1_a/bsu_N"/>
</dbReference>
<dbReference type="InterPro" id="IPR036121">
    <property type="entry name" value="ATPase_F1/V1/A1_a/bsu_N_sf"/>
</dbReference>
<dbReference type="InterPro" id="IPR000194">
    <property type="entry name" value="ATPase_F1/V1/A1_a/bsu_nucl-bd"/>
</dbReference>
<dbReference type="InterPro" id="IPR027417">
    <property type="entry name" value="P-loop_NTPase"/>
</dbReference>
<dbReference type="NCBIfam" id="TIGR00962">
    <property type="entry name" value="atpA"/>
    <property type="match status" value="1"/>
</dbReference>
<dbReference type="NCBIfam" id="NF009884">
    <property type="entry name" value="PRK13343.1"/>
    <property type="match status" value="1"/>
</dbReference>
<dbReference type="PANTHER" id="PTHR48082">
    <property type="entry name" value="ATP SYNTHASE SUBUNIT ALPHA, MITOCHONDRIAL"/>
    <property type="match status" value="1"/>
</dbReference>
<dbReference type="PANTHER" id="PTHR48082:SF2">
    <property type="entry name" value="ATP SYNTHASE SUBUNIT ALPHA, MITOCHONDRIAL"/>
    <property type="match status" value="1"/>
</dbReference>
<dbReference type="Pfam" id="PF00006">
    <property type="entry name" value="ATP-synt_ab"/>
    <property type="match status" value="1"/>
</dbReference>
<dbReference type="Pfam" id="PF00306">
    <property type="entry name" value="ATP-synt_ab_C"/>
    <property type="match status" value="1"/>
</dbReference>
<dbReference type="Pfam" id="PF02874">
    <property type="entry name" value="ATP-synt_ab_N"/>
    <property type="match status" value="1"/>
</dbReference>
<dbReference type="SUPFAM" id="SSF47917">
    <property type="entry name" value="C-terminal domain of alpha and beta subunits of F1 ATP synthase"/>
    <property type="match status" value="1"/>
</dbReference>
<dbReference type="SUPFAM" id="SSF50615">
    <property type="entry name" value="N-terminal domain of alpha and beta subunits of F1 ATP synthase"/>
    <property type="match status" value="1"/>
</dbReference>
<dbReference type="SUPFAM" id="SSF52540">
    <property type="entry name" value="P-loop containing nucleoside triphosphate hydrolases"/>
    <property type="match status" value="1"/>
</dbReference>
<reference key="1">
    <citation type="journal article" date="1995" name="Science">
        <title>The minimal gene complement of Mycoplasma genitalium.</title>
        <authorList>
            <person name="Fraser C.M."/>
            <person name="Gocayne J.D."/>
            <person name="White O."/>
            <person name="Adams M.D."/>
            <person name="Clayton R.A."/>
            <person name="Fleischmann R.D."/>
            <person name="Bult C.J."/>
            <person name="Kerlavage A.R."/>
            <person name="Sutton G.G."/>
            <person name="Kelley J.M."/>
            <person name="Fritchman J.L."/>
            <person name="Weidman J.F."/>
            <person name="Small K.V."/>
            <person name="Sandusky M."/>
            <person name="Fuhrmann J.L."/>
            <person name="Nguyen D.T."/>
            <person name="Utterback T.R."/>
            <person name="Saudek D.M."/>
            <person name="Phillips C.A."/>
            <person name="Merrick J.M."/>
            <person name="Tomb J.-F."/>
            <person name="Dougherty B.A."/>
            <person name="Bott K.F."/>
            <person name="Hu P.-C."/>
            <person name="Lucier T.S."/>
            <person name="Peterson S.N."/>
            <person name="Smith H.O."/>
            <person name="Hutchison C.A. III"/>
            <person name="Venter J.C."/>
        </authorList>
    </citation>
    <scope>NUCLEOTIDE SEQUENCE [LARGE SCALE GENOMIC DNA]</scope>
    <source>
        <strain>ATCC 33530 / DSM 19775 / NCTC 10195 / G37</strain>
    </source>
</reference>
<reference key="2">
    <citation type="journal article" date="1993" name="J. Bacteriol.">
        <title>A survey of the Mycoplasma genitalium genome by using random sequencing.</title>
        <authorList>
            <person name="Peterson S.N."/>
            <person name="Hu P.-C."/>
            <person name="Bott K.F."/>
            <person name="Hutchison C.A. III"/>
        </authorList>
    </citation>
    <scope>NUCLEOTIDE SEQUENCE [GENOMIC DNA] OF 325-518</scope>
    <source>
        <strain>ATCC 33530 / DSM 19775 / NCTC 10195 / G37</strain>
    </source>
</reference>
<evidence type="ECO:0000255" key="1">
    <source>
        <dbReference type="HAMAP-Rule" id="MF_01346"/>
    </source>
</evidence>
<evidence type="ECO:0000305" key="2"/>
<sequence length="518" mass="57216">MADKLNEYVALIKTEIKKYSKKIFNSEIGQVISVADGIAKVSGLENALLNELIQFENNIQGIVLNLEQNTVGIALFGDYSSLREGSTAKRTHSVMKTPVGDVMLGRIVNALGEAIDGRGDIKATEYDQIEKIAPGVMKRKSVNQPLETGILTIDALFPIGKGQRELIVGDRQTGKTAIAIDTIINQKDKDVYCVYVAIGQKNSSVAQIVHQLEVNDSMKYTTVVCATASDSDSMVYLSPFTGITIAEYWLKKGKDVLIVFDDLSKHAVAYRTLSLLLKRPPGREAFPGDVFYLHSRLLERACKLNDENGGGSITALPIIETQAGDISAYIPTNVISITDGQLFMVSSLFNAGQRPAIQIGLSVSRVGSAAQTKAIKQQTGSLKLELAQYSELDSFSQFGSDLDENTKKVLEHGKRVMEMIKQPNGKPYSQVHEALFLFAINKAFIKFIPVDEIAKFKQRITEEFNGSHPLFKELSNKKEFTEDLESKTKTAFKMLVKRFISTLTDYDITKFGSIEELN</sequence>
<protein>
    <recommendedName>
        <fullName evidence="1">ATP synthase subunit alpha</fullName>
        <ecNumber evidence="1">7.1.2.2</ecNumber>
    </recommendedName>
    <alternativeName>
        <fullName evidence="1">ATP synthase F1 sector subunit alpha</fullName>
    </alternativeName>
    <alternativeName>
        <fullName evidence="1">F-ATPase subunit alpha</fullName>
    </alternativeName>
</protein>